<gene>
    <name evidence="1" type="primary">bpt</name>
    <name type="ordered locus">Pnuc_0742</name>
</gene>
<dbReference type="EC" id="2.3.2.29" evidence="1"/>
<dbReference type="EMBL" id="CP000655">
    <property type="protein sequence ID" value="ABP33960.1"/>
    <property type="molecule type" value="Genomic_DNA"/>
</dbReference>
<dbReference type="RefSeq" id="WP_011902585.1">
    <property type="nucleotide sequence ID" value="NC_009379.1"/>
</dbReference>
<dbReference type="SMR" id="A4SWU6"/>
<dbReference type="GeneID" id="31481103"/>
<dbReference type="KEGG" id="pnu:Pnuc_0742"/>
<dbReference type="eggNOG" id="COG2935">
    <property type="taxonomic scope" value="Bacteria"/>
</dbReference>
<dbReference type="HOGENOM" id="CLU_077607_0_0_4"/>
<dbReference type="Proteomes" id="UP000000231">
    <property type="component" value="Chromosome"/>
</dbReference>
<dbReference type="GO" id="GO:0005737">
    <property type="term" value="C:cytoplasm"/>
    <property type="evidence" value="ECO:0007669"/>
    <property type="project" value="UniProtKB-SubCell"/>
</dbReference>
<dbReference type="GO" id="GO:0004057">
    <property type="term" value="F:arginyl-tRNA--protein transferase activity"/>
    <property type="evidence" value="ECO:0007669"/>
    <property type="project" value="InterPro"/>
</dbReference>
<dbReference type="GO" id="GO:0008914">
    <property type="term" value="F:leucyl-tRNA--protein transferase activity"/>
    <property type="evidence" value="ECO:0007669"/>
    <property type="project" value="UniProtKB-UniRule"/>
</dbReference>
<dbReference type="GO" id="GO:0071596">
    <property type="term" value="P:ubiquitin-dependent protein catabolic process via the N-end rule pathway"/>
    <property type="evidence" value="ECO:0007669"/>
    <property type="project" value="InterPro"/>
</dbReference>
<dbReference type="HAMAP" id="MF_00689">
    <property type="entry name" value="Bpt"/>
    <property type="match status" value="1"/>
</dbReference>
<dbReference type="InterPro" id="IPR016181">
    <property type="entry name" value="Acyl_CoA_acyltransferase"/>
</dbReference>
<dbReference type="InterPro" id="IPR017138">
    <property type="entry name" value="Asp_Glu_LeuTrfase"/>
</dbReference>
<dbReference type="InterPro" id="IPR030700">
    <property type="entry name" value="N-end_Aminoacyl_Trfase"/>
</dbReference>
<dbReference type="InterPro" id="IPR007472">
    <property type="entry name" value="N-end_Aminoacyl_Trfase_C"/>
</dbReference>
<dbReference type="InterPro" id="IPR007471">
    <property type="entry name" value="N-end_Aminoacyl_Trfase_N"/>
</dbReference>
<dbReference type="NCBIfam" id="NF002341">
    <property type="entry name" value="PRK01305.1-1"/>
    <property type="match status" value="1"/>
</dbReference>
<dbReference type="NCBIfam" id="NF002342">
    <property type="entry name" value="PRK01305.1-3"/>
    <property type="match status" value="1"/>
</dbReference>
<dbReference type="NCBIfam" id="NF002346">
    <property type="entry name" value="PRK01305.2-3"/>
    <property type="match status" value="1"/>
</dbReference>
<dbReference type="PANTHER" id="PTHR21367">
    <property type="entry name" value="ARGININE-TRNA-PROTEIN TRANSFERASE 1"/>
    <property type="match status" value="1"/>
</dbReference>
<dbReference type="PANTHER" id="PTHR21367:SF1">
    <property type="entry name" value="ARGINYL-TRNA--PROTEIN TRANSFERASE 1"/>
    <property type="match status" value="1"/>
</dbReference>
<dbReference type="Pfam" id="PF04377">
    <property type="entry name" value="ATE_C"/>
    <property type="match status" value="1"/>
</dbReference>
<dbReference type="Pfam" id="PF04376">
    <property type="entry name" value="ATE_N"/>
    <property type="match status" value="1"/>
</dbReference>
<dbReference type="PIRSF" id="PIRSF037208">
    <property type="entry name" value="ATE_pro_prd"/>
    <property type="match status" value="1"/>
</dbReference>
<dbReference type="SUPFAM" id="SSF55729">
    <property type="entry name" value="Acyl-CoA N-acyltransferases (Nat)"/>
    <property type="match status" value="1"/>
</dbReference>
<name>BPT_POLAQ</name>
<evidence type="ECO:0000255" key="1">
    <source>
        <dbReference type="HAMAP-Rule" id="MF_00689"/>
    </source>
</evidence>
<organism>
    <name type="scientific">Polynucleobacter asymbioticus (strain DSM 18221 / CIP 109841 / QLW-P1DMWA-1)</name>
    <name type="common">Polynucleobacter necessarius subsp. asymbioticus</name>
    <dbReference type="NCBI Taxonomy" id="312153"/>
    <lineage>
        <taxon>Bacteria</taxon>
        <taxon>Pseudomonadati</taxon>
        <taxon>Pseudomonadota</taxon>
        <taxon>Betaproteobacteria</taxon>
        <taxon>Burkholderiales</taxon>
        <taxon>Burkholderiaceae</taxon>
        <taxon>Polynucleobacter</taxon>
    </lineage>
</organism>
<comment type="function">
    <text evidence="1">Functions in the N-end rule pathway of protein degradation where it conjugates Leu from its aminoacyl-tRNA to the N-termini of proteins containing an N-terminal aspartate or glutamate.</text>
</comment>
<comment type="catalytic activity">
    <reaction evidence="1">
        <text>N-terminal L-glutamyl-[protein] + L-leucyl-tRNA(Leu) = N-terminal L-leucyl-L-glutamyl-[protein] + tRNA(Leu) + H(+)</text>
        <dbReference type="Rhea" id="RHEA:50412"/>
        <dbReference type="Rhea" id="RHEA-COMP:9613"/>
        <dbReference type="Rhea" id="RHEA-COMP:9622"/>
        <dbReference type="Rhea" id="RHEA-COMP:12664"/>
        <dbReference type="Rhea" id="RHEA-COMP:12668"/>
        <dbReference type="ChEBI" id="CHEBI:15378"/>
        <dbReference type="ChEBI" id="CHEBI:64721"/>
        <dbReference type="ChEBI" id="CHEBI:78442"/>
        <dbReference type="ChEBI" id="CHEBI:78494"/>
        <dbReference type="ChEBI" id="CHEBI:133041"/>
        <dbReference type="EC" id="2.3.2.29"/>
    </reaction>
</comment>
<comment type="catalytic activity">
    <reaction evidence="1">
        <text>N-terminal L-aspartyl-[protein] + L-leucyl-tRNA(Leu) = N-terminal L-leucyl-L-aspartyl-[protein] + tRNA(Leu) + H(+)</text>
        <dbReference type="Rhea" id="RHEA:50420"/>
        <dbReference type="Rhea" id="RHEA-COMP:9613"/>
        <dbReference type="Rhea" id="RHEA-COMP:9622"/>
        <dbReference type="Rhea" id="RHEA-COMP:12669"/>
        <dbReference type="Rhea" id="RHEA-COMP:12674"/>
        <dbReference type="ChEBI" id="CHEBI:15378"/>
        <dbReference type="ChEBI" id="CHEBI:64720"/>
        <dbReference type="ChEBI" id="CHEBI:78442"/>
        <dbReference type="ChEBI" id="CHEBI:78494"/>
        <dbReference type="ChEBI" id="CHEBI:133042"/>
        <dbReference type="EC" id="2.3.2.29"/>
    </reaction>
</comment>
<comment type="subcellular location">
    <subcellularLocation>
        <location evidence="1">Cytoplasm</location>
    </subcellularLocation>
</comment>
<comment type="similarity">
    <text evidence="1">Belongs to the R-transferase family. Bpt subfamily.</text>
</comment>
<feature type="chain" id="PRO_1000131990" description="Aspartate/glutamate leucyltransferase">
    <location>
        <begin position="1"/>
        <end position="248"/>
    </location>
</feature>
<sequence length="248" mass="28694">MTRLKELPLTALQFYATAPYPCSYLPNKTARSQVATPSHLIHADIYNELLNAGFRRSGLYTYRPYCDECKACVATRILVNQFAPTRSQRRAWKKHAGLVASVLNLGYQEEHYQLYQNYQNQRHAGGDMDSDDQDQYMQFLLQSRVNSRIVEYRDGPQDPHPGRLRMVSMIDLLEQGISSVYTFYDASDTTASFGSYSILWQLEQTKELNLPYLYLGYYIKDSEKMSYKAKYQPMEGLIDDHWQALTGS</sequence>
<keyword id="KW-0012">Acyltransferase</keyword>
<keyword id="KW-0963">Cytoplasm</keyword>
<keyword id="KW-1185">Reference proteome</keyword>
<keyword id="KW-0808">Transferase</keyword>
<accession>A4SWU6</accession>
<proteinExistence type="inferred from homology"/>
<protein>
    <recommendedName>
        <fullName evidence="1">Aspartate/glutamate leucyltransferase</fullName>
        <ecNumber evidence="1">2.3.2.29</ecNumber>
    </recommendedName>
</protein>
<reference key="1">
    <citation type="journal article" date="2012" name="Stand. Genomic Sci.">
        <title>Complete genome sequence of Polynucleobacter necessarius subsp. asymbioticus type strain (QLW-P1DMWA-1(T)).</title>
        <authorList>
            <person name="Meincke L."/>
            <person name="Copeland A."/>
            <person name="Lapidus A."/>
            <person name="Lucas S."/>
            <person name="Berry K.W."/>
            <person name="Del Rio T.G."/>
            <person name="Hammon N."/>
            <person name="Dalin E."/>
            <person name="Tice H."/>
            <person name="Pitluck S."/>
            <person name="Richardson P."/>
            <person name="Bruce D."/>
            <person name="Goodwin L."/>
            <person name="Han C."/>
            <person name="Tapia R."/>
            <person name="Detter J.C."/>
            <person name="Schmutz J."/>
            <person name="Brettin T."/>
            <person name="Larimer F."/>
            <person name="Land M."/>
            <person name="Hauser L."/>
            <person name="Kyrpides N.C."/>
            <person name="Ivanova N."/>
            <person name="Goker M."/>
            <person name="Woyke T."/>
            <person name="Wu Q.L."/>
            <person name="Pockl M."/>
            <person name="Hahn M.W."/>
            <person name="Klenk H.P."/>
        </authorList>
    </citation>
    <scope>NUCLEOTIDE SEQUENCE [LARGE SCALE GENOMIC DNA]</scope>
    <source>
        <strain>DSM 18221 / CIP 109841 / QLW-P1DMWA-1</strain>
    </source>
</reference>